<name>COAE_SYNY3</name>
<gene>
    <name evidence="1" type="primary">coaE</name>
    <name type="ordered locus">slr0553</name>
</gene>
<proteinExistence type="inferred from homology"/>
<dbReference type="EC" id="2.7.1.24" evidence="1"/>
<dbReference type="EMBL" id="BA000022">
    <property type="protein sequence ID" value="BAA10873.1"/>
    <property type="molecule type" value="Genomic_DNA"/>
</dbReference>
<dbReference type="PIR" id="S76026">
    <property type="entry name" value="S76026"/>
</dbReference>
<dbReference type="SMR" id="Q55515"/>
<dbReference type="FunCoup" id="Q55515">
    <property type="interactions" value="413"/>
</dbReference>
<dbReference type="IntAct" id="Q55515">
    <property type="interactions" value="3"/>
</dbReference>
<dbReference type="STRING" id="1148.gene:10500379"/>
<dbReference type="PaxDb" id="1148-1001383"/>
<dbReference type="EnsemblBacteria" id="BAA10873">
    <property type="protein sequence ID" value="BAA10873"/>
    <property type="gene ID" value="BAA10873"/>
</dbReference>
<dbReference type="KEGG" id="syn:slr0553"/>
<dbReference type="eggNOG" id="COG0237">
    <property type="taxonomic scope" value="Bacteria"/>
</dbReference>
<dbReference type="InParanoid" id="Q55515"/>
<dbReference type="PhylomeDB" id="Q55515"/>
<dbReference type="UniPathway" id="UPA00241">
    <property type="reaction ID" value="UER00356"/>
</dbReference>
<dbReference type="Proteomes" id="UP000001425">
    <property type="component" value="Chromosome"/>
</dbReference>
<dbReference type="GO" id="GO:0005737">
    <property type="term" value="C:cytoplasm"/>
    <property type="evidence" value="ECO:0007669"/>
    <property type="project" value="UniProtKB-SubCell"/>
</dbReference>
<dbReference type="GO" id="GO:0005524">
    <property type="term" value="F:ATP binding"/>
    <property type="evidence" value="ECO:0007669"/>
    <property type="project" value="UniProtKB-UniRule"/>
</dbReference>
<dbReference type="GO" id="GO:0004140">
    <property type="term" value="F:dephospho-CoA kinase activity"/>
    <property type="evidence" value="ECO:0000318"/>
    <property type="project" value="GO_Central"/>
</dbReference>
<dbReference type="GO" id="GO:0015937">
    <property type="term" value="P:coenzyme A biosynthetic process"/>
    <property type="evidence" value="ECO:0000318"/>
    <property type="project" value="GO_Central"/>
</dbReference>
<dbReference type="CDD" id="cd02022">
    <property type="entry name" value="DPCK"/>
    <property type="match status" value="1"/>
</dbReference>
<dbReference type="FunFam" id="3.40.50.300:FF:004293">
    <property type="entry name" value="Dephospho-CoA kinase"/>
    <property type="match status" value="1"/>
</dbReference>
<dbReference type="Gene3D" id="3.40.50.300">
    <property type="entry name" value="P-loop containing nucleotide triphosphate hydrolases"/>
    <property type="match status" value="1"/>
</dbReference>
<dbReference type="HAMAP" id="MF_00376">
    <property type="entry name" value="Dephospho_CoA_kinase"/>
    <property type="match status" value="1"/>
</dbReference>
<dbReference type="InterPro" id="IPR001977">
    <property type="entry name" value="Depp_CoAkinase"/>
</dbReference>
<dbReference type="InterPro" id="IPR027417">
    <property type="entry name" value="P-loop_NTPase"/>
</dbReference>
<dbReference type="NCBIfam" id="TIGR00152">
    <property type="entry name" value="dephospho-CoA kinase"/>
    <property type="match status" value="1"/>
</dbReference>
<dbReference type="PANTHER" id="PTHR10695:SF46">
    <property type="entry name" value="BIFUNCTIONAL COENZYME A SYNTHASE-RELATED"/>
    <property type="match status" value="1"/>
</dbReference>
<dbReference type="PANTHER" id="PTHR10695">
    <property type="entry name" value="DEPHOSPHO-COA KINASE-RELATED"/>
    <property type="match status" value="1"/>
</dbReference>
<dbReference type="Pfam" id="PF01121">
    <property type="entry name" value="CoaE"/>
    <property type="match status" value="1"/>
</dbReference>
<dbReference type="SUPFAM" id="SSF52540">
    <property type="entry name" value="P-loop containing nucleoside triphosphate hydrolases"/>
    <property type="match status" value="1"/>
</dbReference>
<dbReference type="PROSITE" id="PS51219">
    <property type="entry name" value="DPCK"/>
    <property type="match status" value="1"/>
</dbReference>
<reference key="1">
    <citation type="journal article" date="1995" name="DNA Res.">
        <title>Sequence analysis of the genome of the unicellular cyanobacterium Synechocystis sp. strain PCC6803. I. Sequence features in the 1 Mb region from map positions 64% to 92% of the genome.</title>
        <authorList>
            <person name="Kaneko T."/>
            <person name="Tanaka A."/>
            <person name="Sato S."/>
            <person name="Kotani H."/>
            <person name="Sazuka T."/>
            <person name="Miyajima N."/>
            <person name="Sugiura M."/>
            <person name="Tabata S."/>
        </authorList>
    </citation>
    <scope>NUCLEOTIDE SEQUENCE [LARGE SCALE GENOMIC DNA]</scope>
    <source>
        <strain>ATCC 27184 / PCC 6803 / N-1</strain>
    </source>
</reference>
<reference key="2">
    <citation type="journal article" date="1996" name="DNA Res.">
        <title>Sequence analysis of the genome of the unicellular cyanobacterium Synechocystis sp. strain PCC6803. II. Sequence determination of the entire genome and assignment of potential protein-coding regions.</title>
        <authorList>
            <person name="Kaneko T."/>
            <person name="Sato S."/>
            <person name="Kotani H."/>
            <person name="Tanaka A."/>
            <person name="Asamizu E."/>
            <person name="Nakamura Y."/>
            <person name="Miyajima N."/>
            <person name="Hirosawa M."/>
            <person name="Sugiura M."/>
            <person name="Sasamoto S."/>
            <person name="Kimura T."/>
            <person name="Hosouchi T."/>
            <person name="Matsuno A."/>
            <person name="Muraki A."/>
            <person name="Nakazaki N."/>
            <person name="Naruo K."/>
            <person name="Okumura S."/>
            <person name="Shimpo S."/>
            <person name="Takeuchi C."/>
            <person name="Wada T."/>
            <person name="Watanabe A."/>
            <person name="Yamada M."/>
            <person name="Yasuda M."/>
            <person name="Tabata S."/>
        </authorList>
    </citation>
    <scope>NUCLEOTIDE SEQUENCE [LARGE SCALE GENOMIC DNA]</scope>
    <source>
        <strain>ATCC 27184 / PCC 6803 / Kazusa</strain>
    </source>
</reference>
<sequence>MDTKPPRQRLIGLTGGIATGKSTVTDYLQQKYSVPILDADLYARQAVEPGSEILVAIARRYGPEILDQQGQLKRQALGEIVFNNAEEKQWLESQIHPFVGRCFRSALAQLKQEQTVLLSIPLLFEAQLTDWVTEIWVVTCGPQQQVERLIKRNGLTEAEALARITSQMPLAEKVALADVVLDNSGQIADLEPQIIKAWHHR</sequence>
<accession>Q55515</accession>
<feature type="chain" id="PRO_0000173020" description="Dephospho-CoA kinase">
    <location>
        <begin position="1"/>
        <end position="201"/>
    </location>
</feature>
<feature type="domain" description="DPCK" evidence="1">
    <location>
        <begin position="10"/>
        <end position="201"/>
    </location>
</feature>
<feature type="binding site" evidence="1">
    <location>
        <begin position="18"/>
        <end position="23"/>
    </location>
    <ligand>
        <name>ATP</name>
        <dbReference type="ChEBI" id="CHEBI:30616"/>
    </ligand>
</feature>
<evidence type="ECO:0000255" key="1">
    <source>
        <dbReference type="HAMAP-Rule" id="MF_00376"/>
    </source>
</evidence>
<evidence type="ECO:0000305" key="2"/>
<keyword id="KW-0067">ATP-binding</keyword>
<keyword id="KW-0173">Coenzyme A biosynthesis</keyword>
<keyword id="KW-0963">Cytoplasm</keyword>
<keyword id="KW-0418">Kinase</keyword>
<keyword id="KW-0547">Nucleotide-binding</keyword>
<keyword id="KW-1185">Reference proteome</keyword>
<keyword id="KW-0808">Transferase</keyword>
<organism>
    <name type="scientific">Synechocystis sp. (strain ATCC 27184 / PCC 6803 / Kazusa)</name>
    <dbReference type="NCBI Taxonomy" id="1111708"/>
    <lineage>
        <taxon>Bacteria</taxon>
        <taxon>Bacillati</taxon>
        <taxon>Cyanobacteriota</taxon>
        <taxon>Cyanophyceae</taxon>
        <taxon>Synechococcales</taxon>
        <taxon>Merismopediaceae</taxon>
        <taxon>Synechocystis</taxon>
    </lineage>
</organism>
<protein>
    <recommendedName>
        <fullName evidence="1">Dephospho-CoA kinase</fullName>
        <ecNumber evidence="1">2.7.1.24</ecNumber>
    </recommendedName>
    <alternativeName>
        <fullName evidence="1">Dephosphocoenzyme A kinase</fullName>
    </alternativeName>
</protein>
<comment type="function">
    <text evidence="1">Catalyzes the phosphorylation of the 3'-hydroxyl group of dephosphocoenzyme A to form coenzyme A.</text>
</comment>
<comment type="catalytic activity">
    <reaction evidence="1">
        <text>3'-dephospho-CoA + ATP = ADP + CoA + H(+)</text>
        <dbReference type="Rhea" id="RHEA:18245"/>
        <dbReference type="ChEBI" id="CHEBI:15378"/>
        <dbReference type="ChEBI" id="CHEBI:30616"/>
        <dbReference type="ChEBI" id="CHEBI:57287"/>
        <dbReference type="ChEBI" id="CHEBI:57328"/>
        <dbReference type="ChEBI" id="CHEBI:456216"/>
        <dbReference type="EC" id="2.7.1.24"/>
    </reaction>
</comment>
<comment type="pathway">
    <text evidence="1">Cofactor biosynthesis; coenzyme A biosynthesis; CoA from (R)-pantothenate: step 5/5.</text>
</comment>
<comment type="subcellular location">
    <subcellularLocation>
        <location evidence="1">Cytoplasm</location>
    </subcellularLocation>
</comment>
<comment type="similarity">
    <text evidence="1 2">Belongs to the CoaE family.</text>
</comment>